<keyword id="KW-0067">ATP-binding</keyword>
<keyword id="KW-0436">Ligase</keyword>
<keyword id="KW-0547">Nucleotide-binding</keyword>
<keyword id="KW-0648">Protein biosynthesis</keyword>
<organism>
    <name type="scientific">Campylobacter jejuni (strain RM1221)</name>
    <dbReference type="NCBI Taxonomy" id="195099"/>
    <lineage>
        <taxon>Bacteria</taxon>
        <taxon>Pseudomonadati</taxon>
        <taxon>Campylobacterota</taxon>
        <taxon>Epsilonproteobacteria</taxon>
        <taxon>Campylobacterales</taxon>
        <taxon>Campylobacteraceae</taxon>
        <taxon>Campylobacter</taxon>
    </lineage>
</organism>
<proteinExistence type="inferred from homology"/>
<accession>Q5HW69</accession>
<dbReference type="EC" id="6.3.5.-" evidence="1"/>
<dbReference type="EMBL" id="CP000025">
    <property type="protein sequence ID" value="AAW35036.1"/>
    <property type="molecule type" value="Genomic_DNA"/>
</dbReference>
<dbReference type="RefSeq" id="WP_002858734.1">
    <property type="nucleotide sequence ID" value="NC_003912.7"/>
</dbReference>
<dbReference type="SMR" id="Q5HW69"/>
<dbReference type="KEGG" id="cjr:CJE0447"/>
<dbReference type="HOGENOM" id="CLU_105899_2_1_7"/>
<dbReference type="GO" id="GO:0050566">
    <property type="term" value="F:asparaginyl-tRNA synthase (glutamine-hydrolyzing) activity"/>
    <property type="evidence" value="ECO:0007669"/>
    <property type="project" value="RHEA"/>
</dbReference>
<dbReference type="GO" id="GO:0005524">
    <property type="term" value="F:ATP binding"/>
    <property type="evidence" value="ECO:0007669"/>
    <property type="project" value="UniProtKB-KW"/>
</dbReference>
<dbReference type="GO" id="GO:0050567">
    <property type="term" value="F:glutaminyl-tRNA synthase (glutamine-hydrolyzing) activity"/>
    <property type="evidence" value="ECO:0007669"/>
    <property type="project" value="UniProtKB-UniRule"/>
</dbReference>
<dbReference type="GO" id="GO:0070681">
    <property type="term" value="P:glutaminyl-tRNAGln biosynthesis via transamidation"/>
    <property type="evidence" value="ECO:0007669"/>
    <property type="project" value="TreeGrafter"/>
</dbReference>
<dbReference type="GO" id="GO:0006450">
    <property type="term" value="P:regulation of translational fidelity"/>
    <property type="evidence" value="ECO:0007669"/>
    <property type="project" value="InterPro"/>
</dbReference>
<dbReference type="GO" id="GO:0006412">
    <property type="term" value="P:translation"/>
    <property type="evidence" value="ECO:0007669"/>
    <property type="project" value="UniProtKB-UniRule"/>
</dbReference>
<dbReference type="Gene3D" id="1.10.20.60">
    <property type="entry name" value="Glu-tRNAGln amidotransferase C subunit, N-terminal domain"/>
    <property type="match status" value="1"/>
</dbReference>
<dbReference type="HAMAP" id="MF_00122">
    <property type="entry name" value="GatC"/>
    <property type="match status" value="1"/>
</dbReference>
<dbReference type="InterPro" id="IPR036113">
    <property type="entry name" value="Asp/Glu-ADT_sf_sub_c"/>
</dbReference>
<dbReference type="InterPro" id="IPR003837">
    <property type="entry name" value="GatC"/>
</dbReference>
<dbReference type="NCBIfam" id="TIGR00135">
    <property type="entry name" value="gatC"/>
    <property type="match status" value="1"/>
</dbReference>
<dbReference type="PANTHER" id="PTHR15004">
    <property type="entry name" value="GLUTAMYL-TRNA(GLN) AMIDOTRANSFERASE SUBUNIT C, MITOCHONDRIAL"/>
    <property type="match status" value="1"/>
</dbReference>
<dbReference type="PANTHER" id="PTHR15004:SF0">
    <property type="entry name" value="GLUTAMYL-TRNA(GLN) AMIDOTRANSFERASE SUBUNIT C, MITOCHONDRIAL"/>
    <property type="match status" value="1"/>
</dbReference>
<dbReference type="Pfam" id="PF02686">
    <property type="entry name" value="GatC"/>
    <property type="match status" value="1"/>
</dbReference>
<dbReference type="SUPFAM" id="SSF141000">
    <property type="entry name" value="Glu-tRNAGln amidotransferase C subunit"/>
    <property type="match status" value="1"/>
</dbReference>
<evidence type="ECO:0000255" key="1">
    <source>
        <dbReference type="HAMAP-Rule" id="MF_00122"/>
    </source>
</evidence>
<name>GATC_CAMJR</name>
<comment type="function">
    <text evidence="1">Allows the formation of correctly charged Asn-tRNA(Asn) or Gln-tRNA(Gln) through the transamidation of misacylated Asp-tRNA(Asn) or Glu-tRNA(Gln) in organisms which lack either or both of asparaginyl-tRNA or glutaminyl-tRNA synthetases. The reaction takes place in the presence of glutamine and ATP through an activated phospho-Asp-tRNA(Asn) or phospho-Glu-tRNA(Gln).</text>
</comment>
<comment type="catalytic activity">
    <reaction evidence="1">
        <text>L-glutamyl-tRNA(Gln) + L-glutamine + ATP + H2O = L-glutaminyl-tRNA(Gln) + L-glutamate + ADP + phosphate + H(+)</text>
        <dbReference type="Rhea" id="RHEA:17521"/>
        <dbReference type="Rhea" id="RHEA-COMP:9681"/>
        <dbReference type="Rhea" id="RHEA-COMP:9684"/>
        <dbReference type="ChEBI" id="CHEBI:15377"/>
        <dbReference type="ChEBI" id="CHEBI:15378"/>
        <dbReference type="ChEBI" id="CHEBI:29985"/>
        <dbReference type="ChEBI" id="CHEBI:30616"/>
        <dbReference type="ChEBI" id="CHEBI:43474"/>
        <dbReference type="ChEBI" id="CHEBI:58359"/>
        <dbReference type="ChEBI" id="CHEBI:78520"/>
        <dbReference type="ChEBI" id="CHEBI:78521"/>
        <dbReference type="ChEBI" id="CHEBI:456216"/>
    </reaction>
</comment>
<comment type="catalytic activity">
    <reaction evidence="1">
        <text>L-aspartyl-tRNA(Asn) + L-glutamine + ATP + H2O = L-asparaginyl-tRNA(Asn) + L-glutamate + ADP + phosphate + 2 H(+)</text>
        <dbReference type="Rhea" id="RHEA:14513"/>
        <dbReference type="Rhea" id="RHEA-COMP:9674"/>
        <dbReference type="Rhea" id="RHEA-COMP:9677"/>
        <dbReference type="ChEBI" id="CHEBI:15377"/>
        <dbReference type="ChEBI" id="CHEBI:15378"/>
        <dbReference type="ChEBI" id="CHEBI:29985"/>
        <dbReference type="ChEBI" id="CHEBI:30616"/>
        <dbReference type="ChEBI" id="CHEBI:43474"/>
        <dbReference type="ChEBI" id="CHEBI:58359"/>
        <dbReference type="ChEBI" id="CHEBI:78515"/>
        <dbReference type="ChEBI" id="CHEBI:78516"/>
        <dbReference type="ChEBI" id="CHEBI:456216"/>
    </reaction>
</comment>
<comment type="subunit">
    <text evidence="1">Heterotrimer of A, B and C subunits.</text>
</comment>
<comment type="similarity">
    <text evidence="1">Belongs to the GatC family.</text>
</comment>
<sequence length="94" mass="10689">MQIDEKLLSKLEKLSALQITKNRNETIAQLSEIVNFVEKLNELDLDSQEITVSTIKGGAPLRIDEIRNSNVIDEVLDCAPKKQEHFFVVPKIIE</sequence>
<gene>
    <name evidence="1" type="primary">gatC</name>
    <name type="ordered locus">CJE0447</name>
</gene>
<protein>
    <recommendedName>
        <fullName evidence="1">Aspartyl/glutamyl-tRNA(Asn/Gln) amidotransferase subunit C</fullName>
        <shortName evidence="1">Asp/Glu-ADT subunit C</shortName>
        <ecNumber evidence="1">6.3.5.-</ecNumber>
    </recommendedName>
</protein>
<reference key="1">
    <citation type="journal article" date="2005" name="PLoS Biol.">
        <title>Major structural differences and novel potential virulence mechanisms from the genomes of multiple Campylobacter species.</title>
        <authorList>
            <person name="Fouts D.E."/>
            <person name="Mongodin E.F."/>
            <person name="Mandrell R.E."/>
            <person name="Miller W.G."/>
            <person name="Rasko D.A."/>
            <person name="Ravel J."/>
            <person name="Brinkac L.M."/>
            <person name="DeBoy R.T."/>
            <person name="Parker C.T."/>
            <person name="Daugherty S.C."/>
            <person name="Dodson R.J."/>
            <person name="Durkin A.S."/>
            <person name="Madupu R."/>
            <person name="Sullivan S.A."/>
            <person name="Shetty J.U."/>
            <person name="Ayodeji M.A."/>
            <person name="Shvartsbeyn A."/>
            <person name="Schatz M.C."/>
            <person name="Badger J.H."/>
            <person name="Fraser C.M."/>
            <person name="Nelson K.E."/>
        </authorList>
    </citation>
    <scope>NUCLEOTIDE SEQUENCE [LARGE SCALE GENOMIC DNA]</scope>
    <source>
        <strain>RM1221</strain>
    </source>
</reference>
<feature type="chain" id="PRO_0000105286" description="Aspartyl/glutamyl-tRNA(Asn/Gln) amidotransferase subunit C">
    <location>
        <begin position="1"/>
        <end position="94"/>
    </location>
</feature>